<comment type="function">
    <text evidence="1">An aminoacyl-tRNA editing enzyme that deacylates mischarged D-aminoacyl-tRNAs. Also deacylates mischarged glycyl-tRNA(Ala), protecting cells against glycine mischarging by AlaRS. Acts via tRNA-based rather than protein-based catalysis; rejects L-amino acids rather than detecting D-amino acids in the active site. By recycling D-aminoacyl-tRNA to D-amino acids and free tRNA molecules, this enzyme counteracts the toxicity associated with the formation of D-aminoacyl-tRNA entities in vivo and helps enforce protein L-homochirality.</text>
</comment>
<comment type="catalytic activity">
    <reaction evidence="1">
        <text>glycyl-tRNA(Ala) + H2O = tRNA(Ala) + glycine + H(+)</text>
        <dbReference type="Rhea" id="RHEA:53744"/>
        <dbReference type="Rhea" id="RHEA-COMP:9657"/>
        <dbReference type="Rhea" id="RHEA-COMP:13640"/>
        <dbReference type="ChEBI" id="CHEBI:15377"/>
        <dbReference type="ChEBI" id="CHEBI:15378"/>
        <dbReference type="ChEBI" id="CHEBI:57305"/>
        <dbReference type="ChEBI" id="CHEBI:78442"/>
        <dbReference type="ChEBI" id="CHEBI:78522"/>
        <dbReference type="EC" id="3.1.1.96"/>
    </reaction>
</comment>
<comment type="catalytic activity">
    <reaction evidence="1">
        <text>a D-aminoacyl-tRNA + H2O = a tRNA + a D-alpha-amino acid + H(+)</text>
        <dbReference type="Rhea" id="RHEA:13953"/>
        <dbReference type="Rhea" id="RHEA-COMP:10123"/>
        <dbReference type="Rhea" id="RHEA-COMP:10124"/>
        <dbReference type="ChEBI" id="CHEBI:15377"/>
        <dbReference type="ChEBI" id="CHEBI:15378"/>
        <dbReference type="ChEBI" id="CHEBI:59871"/>
        <dbReference type="ChEBI" id="CHEBI:78442"/>
        <dbReference type="ChEBI" id="CHEBI:79333"/>
        <dbReference type="EC" id="3.1.1.96"/>
    </reaction>
</comment>
<comment type="subunit">
    <text evidence="1">Homodimer.</text>
</comment>
<comment type="subcellular location">
    <subcellularLocation>
        <location evidence="1">Cytoplasm</location>
    </subcellularLocation>
</comment>
<comment type="domain">
    <text evidence="1">A Gly-cisPro motif from one monomer fits into the active site of the other monomer to allow specific chiral rejection of L-amino acids.</text>
</comment>
<comment type="similarity">
    <text evidence="1">Belongs to the DTD family.</text>
</comment>
<keyword id="KW-0963">Cytoplasm</keyword>
<keyword id="KW-0378">Hydrolase</keyword>
<keyword id="KW-0694">RNA-binding</keyword>
<keyword id="KW-0820">tRNA-binding</keyword>
<accession>Q72K35</accession>
<feature type="chain" id="PRO_0000164612" description="D-aminoacyl-tRNA deacylase">
    <location>
        <begin position="1"/>
        <end position="152"/>
    </location>
</feature>
<feature type="short sequence motif" description="Gly-cisPro motif, important for rejection of L-amino acids" evidence="1">
    <location>
        <begin position="137"/>
        <end position="138"/>
    </location>
</feature>
<protein>
    <recommendedName>
        <fullName evidence="1">D-aminoacyl-tRNA deacylase</fullName>
        <shortName evidence="1">DTD</shortName>
        <ecNumber evidence="1">3.1.1.96</ecNumber>
    </recommendedName>
    <alternativeName>
        <fullName evidence="1">Gly-tRNA(Ala) deacylase</fullName>
    </alternativeName>
</protein>
<evidence type="ECO:0000255" key="1">
    <source>
        <dbReference type="HAMAP-Rule" id="MF_00518"/>
    </source>
</evidence>
<reference key="1">
    <citation type="journal article" date="2004" name="Nat. Biotechnol.">
        <title>The genome sequence of the extreme thermophile Thermus thermophilus.</title>
        <authorList>
            <person name="Henne A."/>
            <person name="Brueggemann H."/>
            <person name="Raasch C."/>
            <person name="Wiezer A."/>
            <person name="Hartsch T."/>
            <person name="Liesegang H."/>
            <person name="Johann A."/>
            <person name="Lienard T."/>
            <person name="Gohl O."/>
            <person name="Martinez-Arias R."/>
            <person name="Jacobi C."/>
            <person name="Starkuviene V."/>
            <person name="Schlenczeck S."/>
            <person name="Dencker S."/>
            <person name="Huber R."/>
            <person name="Klenk H.-P."/>
            <person name="Kramer W."/>
            <person name="Merkl R."/>
            <person name="Gottschalk G."/>
            <person name="Fritz H.-J."/>
        </authorList>
    </citation>
    <scope>NUCLEOTIDE SEQUENCE [LARGE SCALE GENOMIC DNA]</scope>
    <source>
        <strain>ATCC BAA-163 / DSM 7039 / HB27</strain>
    </source>
</reference>
<dbReference type="EC" id="3.1.1.96" evidence="1"/>
<dbReference type="EMBL" id="AE017221">
    <property type="protein sequence ID" value="AAS80931.1"/>
    <property type="molecule type" value="Genomic_DNA"/>
</dbReference>
<dbReference type="RefSeq" id="WP_011173028.1">
    <property type="nucleotide sequence ID" value="NC_005835.1"/>
</dbReference>
<dbReference type="SMR" id="Q72K35"/>
<dbReference type="GeneID" id="3169002"/>
<dbReference type="KEGG" id="tth:TT_C0583"/>
<dbReference type="eggNOG" id="COG1490">
    <property type="taxonomic scope" value="Bacteria"/>
</dbReference>
<dbReference type="HOGENOM" id="CLU_076901_1_0_0"/>
<dbReference type="OrthoDB" id="9801395at2"/>
<dbReference type="BRENDA" id="3.1.1.96">
    <property type="organism ID" value="2305"/>
</dbReference>
<dbReference type="Proteomes" id="UP000000592">
    <property type="component" value="Chromosome"/>
</dbReference>
<dbReference type="GO" id="GO:0005737">
    <property type="term" value="C:cytoplasm"/>
    <property type="evidence" value="ECO:0007669"/>
    <property type="project" value="UniProtKB-SubCell"/>
</dbReference>
<dbReference type="GO" id="GO:0051500">
    <property type="term" value="F:D-tyrosyl-tRNA(Tyr) deacylase activity"/>
    <property type="evidence" value="ECO:0007669"/>
    <property type="project" value="TreeGrafter"/>
</dbReference>
<dbReference type="GO" id="GO:0106026">
    <property type="term" value="F:Gly-tRNA(Ala) deacylase activity"/>
    <property type="evidence" value="ECO:0007669"/>
    <property type="project" value="UniProtKB-UniRule"/>
</dbReference>
<dbReference type="GO" id="GO:0043908">
    <property type="term" value="F:Ser(Gly)-tRNA(Ala) hydrolase activity"/>
    <property type="evidence" value="ECO:0007669"/>
    <property type="project" value="UniProtKB-UniRule"/>
</dbReference>
<dbReference type="GO" id="GO:0000049">
    <property type="term" value="F:tRNA binding"/>
    <property type="evidence" value="ECO:0007669"/>
    <property type="project" value="UniProtKB-UniRule"/>
</dbReference>
<dbReference type="GO" id="GO:0019478">
    <property type="term" value="P:D-amino acid catabolic process"/>
    <property type="evidence" value="ECO:0007669"/>
    <property type="project" value="UniProtKB-UniRule"/>
</dbReference>
<dbReference type="CDD" id="cd00563">
    <property type="entry name" value="Dtyr_deacylase"/>
    <property type="match status" value="1"/>
</dbReference>
<dbReference type="FunFam" id="3.50.80.10:FF:000001">
    <property type="entry name" value="D-aminoacyl-tRNA deacylase"/>
    <property type="match status" value="1"/>
</dbReference>
<dbReference type="Gene3D" id="3.50.80.10">
    <property type="entry name" value="D-tyrosyl-tRNA(Tyr) deacylase"/>
    <property type="match status" value="1"/>
</dbReference>
<dbReference type="HAMAP" id="MF_00518">
    <property type="entry name" value="Deacylase_Dtd"/>
    <property type="match status" value="1"/>
</dbReference>
<dbReference type="InterPro" id="IPR003732">
    <property type="entry name" value="Daa-tRNA_deacyls_DTD"/>
</dbReference>
<dbReference type="InterPro" id="IPR023509">
    <property type="entry name" value="DTD-like_sf"/>
</dbReference>
<dbReference type="NCBIfam" id="TIGR00256">
    <property type="entry name" value="D-aminoacyl-tRNA deacylase"/>
    <property type="match status" value="1"/>
</dbReference>
<dbReference type="PANTHER" id="PTHR10472:SF5">
    <property type="entry name" value="D-AMINOACYL-TRNA DEACYLASE 1"/>
    <property type="match status" value="1"/>
</dbReference>
<dbReference type="PANTHER" id="PTHR10472">
    <property type="entry name" value="D-TYROSYL-TRNA TYR DEACYLASE"/>
    <property type="match status" value="1"/>
</dbReference>
<dbReference type="Pfam" id="PF02580">
    <property type="entry name" value="Tyr_Deacylase"/>
    <property type="match status" value="1"/>
</dbReference>
<dbReference type="SUPFAM" id="SSF69500">
    <property type="entry name" value="DTD-like"/>
    <property type="match status" value="1"/>
</dbReference>
<sequence length="152" mass="16791">MRAVVQRVSEAFVEVEGEVVGRIGLGLLVLLGVGQKDSLEDALYLARKIVNLRVFPDAQDKMNLSLKDVGGEVLLVSQFTLYADTRKGNRPSFAKAAPPDQGKRLYEAALEAFLQQGVHVETGVYGAHMRVHLVNDGPVTLFLDSEERFRPR</sequence>
<name>DTD_THET2</name>
<gene>
    <name evidence="1" type="primary">dtd</name>
    <name type="ordered locus">TT_C0583</name>
</gene>
<proteinExistence type="inferred from homology"/>
<organism>
    <name type="scientific">Thermus thermophilus (strain ATCC BAA-163 / DSM 7039 / HB27)</name>
    <dbReference type="NCBI Taxonomy" id="262724"/>
    <lineage>
        <taxon>Bacteria</taxon>
        <taxon>Thermotogati</taxon>
        <taxon>Deinococcota</taxon>
        <taxon>Deinococci</taxon>
        <taxon>Thermales</taxon>
        <taxon>Thermaceae</taxon>
        <taxon>Thermus</taxon>
    </lineage>
</organism>